<comment type="function">
    <text evidence="6 14">E3 SUMO-protein ligase that catalyzes sumoylation of target proteins by promoting the transfer of SUMO from the E2 enzyme to the substrate (PubMed:12679040, PubMed:22825850). Involved in the sumoylation of HNRNPK, a p53/TP53 transcriptional coactivator, hence indirectly regulates p53/TP53 transcriptional activation resulting in p21/CDKN1A expression. Monosumoylates ZNF131 (PubMed:22825850).</text>
</comment>
<comment type="function">
    <text evidence="1 5 11 12">Component of a Polycomb group (PcG) multiprotein PRC1-like complex, a complex class required to maintain the transcriptionally repressive state of many genes, including Hox genes, throughout development (PubMed:12167701, PubMed:19636380, PubMed:21282530). PcG PRC1 complex acts via chromatin remodeling and modification of histones; it mediates monoubiquitination of histone H2A 'Lys-119', rendering chromatin heritably changed in its expressibility (PubMed:12167701, PubMed:19636380, PubMed:21282530). Binds to histone H3 trimethylated at 'Lys-9' (H3K9me3) (By similarity). Plays a role in the lineage differentiation of the germ layers in embryonic development (By similarity).</text>
</comment>
<comment type="pathway">
    <text>Protein modification; protein sumoylation.</text>
</comment>
<comment type="subunit">
    <text evidence="1 4 5 8 9 11 12 15 17">Interacts with histone H3-K9Me3 (By similarity). Interacts with CHTOP (By similarity). Component of a PRC1-like complex (PubMed:12167701, PubMed:19636380, PubMed:21282530). The composition of the PRC1 complex differs between the PRC1 complex in pluripotent embryonic stem cells containing RNF2, CBX7 and PCGF2, and the PRC1 complex in differentiating cells containing RNF2, CBX2, CBX4 and BMI1 (By similarity). Self-associates (PubMed:21282530). Interacts with SUV39H1 and HIPK2 (PubMed:12101246, PubMed:17018294). Interacts with CSNK2B (PubMed:21282530). May interact with H3C15, H3C1 and RNF2 (PubMed:18927235). Interacts with SUMO1P1/SUMO5 (PubMed:27211601). Interacts with PRDM1/Blimp-1 (PubMed:28842558).</text>
</comment>
<comment type="interaction">
    <interactant intactId="EBI-722425">
        <id>O00257</id>
    </interactant>
    <interactant intactId="EBI-2341576">
        <id>P35226</id>
        <label>BMI1</label>
    </interactant>
    <organismsDiffer>false</organismsDiffer>
    <experiments>9</experiments>
</comment>
<comment type="interaction">
    <interactant intactId="EBI-722425">
        <id>O00257</id>
    </interactant>
    <interactant intactId="EBI-712912">
        <id>Q9HC52</id>
        <label>CBX8</label>
    </interactant>
    <organismsDiffer>false</organismsDiffer>
    <experiments>4</experiments>
</comment>
<comment type="interaction">
    <interactant intactId="EBI-722425">
        <id>O00257</id>
    </interactant>
    <interactant intactId="EBI-908846">
        <id>Q13363</id>
        <label>CTBP1</label>
    </interactant>
    <organismsDiffer>false</organismsDiffer>
    <experiments>5</experiments>
</comment>
<comment type="interaction">
    <interactant intactId="EBI-722425">
        <id>O00257</id>
    </interactant>
    <interactant intactId="EBI-447269">
        <id>Q16665</id>
        <label>HIF1A</label>
    </interactant>
    <organismsDiffer>false</organismsDiffer>
    <experiments>15</experiments>
</comment>
<comment type="interaction">
    <interactant intactId="EBI-722425">
        <id>O00257</id>
    </interactant>
    <interactant intactId="EBI-722416">
        <id>Q99496</id>
        <label>RNF2</label>
    </interactant>
    <organismsDiffer>false</organismsDiffer>
    <experiments>5</experiments>
</comment>
<comment type="interaction">
    <interactant intactId="EBI-722425">
        <id>O00257</id>
    </interactant>
    <interactant intactId="EBI-80140">
        <id>P63165</id>
        <label>SUMO1</label>
    </interactant>
    <organismsDiffer>false</organismsDiffer>
    <experiments>4</experiments>
</comment>
<comment type="interaction">
    <interactant intactId="EBI-722425">
        <id>O00257</id>
    </interactant>
    <interactant intactId="EBI-359815">
        <id>P31946</id>
        <label>YWHAB</label>
    </interactant>
    <organismsDiffer>false</organismsDiffer>
    <experiments>3</experiments>
</comment>
<comment type="interaction">
    <interactant intactId="EBI-4392727">
        <id>O00257-3</id>
    </interactant>
    <interactant intactId="EBI-12805486">
        <id>A6NKF2</id>
        <label>ARID3C</label>
    </interactant>
    <organismsDiffer>false</organismsDiffer>
    <experiments>3</experiments>
</comment>
<comment type="interaction">
    <interactant intactId="EBI-4392727">
        <id>O00257-3</id>
    </interactant>
    <interactant intactId="EBI-2341576">
        <id>P35226</id>
        <label>BMI1</label>
    </interactant>
    <organismsDiffer>false</organismsDiffer>
    <experiments>2</experiments>
</comment>
<comment type="interaction">
    <interactant intactId="EBI-4392727">
        <id>O00257-3</id>
    </interactant>
    <interactant intactId="EBI-718729">
        <id>P55212</id>
        <label>CASP6</label>
    </interactant>
    <organismsDiffer>false</organismsDiffer>
    <experiments>3</experiments>
</comment>
<comment type="interaction">
    <interactant intactId="EBI-4392727">
        <id>O00257-3</id>
    </interactant>
    <interactant intactId="EBI-6624398">
        <id>P06307</id>
        <label>CCK</label>
    </interactant>
    <organismsDiffer>false</organismsDiffer>
    <experiments>3</experiments>
</comment>
<comment type="interaction">
    <interactant intactId="EBI-4392727">
        <id>O00257-3</id>
    </interactant>
    <interactant intactId="EBI-25837549">
        <id>P28329-3</id>
        <label>CHAT</label>
    </interactant>
    <organismsDiffer>false</organismsDiffer>
    <experiments>3</experiments>
</comment>
<comment type="interaction">
    <interactant intactId="EBI-4392727">
        <id>O00257-3</id>
    </interactant>
    <interactant intactId="EBI-347804">
        <id>P68400</id>
        <label>CSNK2A1</label>
    </interactant>
    <organismsDiffer>false</organismsDiffer>
    <experiments>2</experiments>
</comment>
<comment type="interaction">
    <interactant intactId="EBI-4392727">
        <id>O00257-3</id>
    </interactant>
    <interactant intactId="EBI-348169">
        <id>P67870</id>
        <label>CSNK2B</label>
    </interactant>
    <organismsDiffer>false</organismsDiffer>
    <experiments>2</experiments>
</comment>
<comment type="interaction">
    <interactant intactId="EBI-4392727">
        <id>O00257-3</id>
    </interactant>
    <interactant intactId="EBI-348399">
        <id>P22607</id>
        <label>FGFR3</label>
    </interactant>
    <organismsDiffer>false</organismsDiffer>
    <experiments>3</experiments>
</comment>
<comment type="interaction">
    <interactant intactId="EBI-4392727">
        <id>O00257-3</id>
    </interactant>
    <interactant intactId="EBI-351506">
        <id>P06396</id>
        <label>GSN</label>
    </interactant>
    <organismsDiffer>false</organismsDiffer>
    <experiments>3</experiments>
</comment>
<comment type="interaction">
    <interactant intactId="EBI-4392727">
        <id>O00257-3</id>
    </interactant>
    <interactant intactId="EBI-473886">
        <id>O00291</id>
        <label>HIP1</label>
    </interactant>
    <organismsDiffer>false</organismsDiffer>
    <experiments>3</experiments>
</comment>
<comment type="interaction">
    <interactant intactId="EBI-4392727">
        <id>O00257-3</id>
    </interactant>
    <interactant intactId="EBI-712096">
        <id>P30519</id>
        <label>HMOX2</label>
    </interactant>
    <organismsDiffer>false</organismsDiffer>
    <experiments>3</experiments>
</comment>
<comment type="interaction">
    <interactant intactId="EBI-4392727">
        <id>O00257-3</id>
    </interactant>
    <interactant intactId="EBI-21591415">
        <id>P13473-2</id>
        <label>LAMP2</label>
    </interactant>
    <organismsDiffer>false</organismsDiffer>
    <experiments>3</experiments>
</comment>
<comment type="interaction">
    <interactant intactId="EBI-4392727">
        <id>O00257-3</id>
    </interactant>
    <interactant intactId="EBI-1048026">
        <id>Q9BYE7</id>
        <label>PCGF6</label>
    </interactant>
    <organismsDiffer>false</organismsDiffer>
    <experiments>2</experiments>
</comment>
<comment type="interaction">
    <interactant intactId="EBI-4392727">
        <id>O00257-3</id>
    </interactant>
    <interactant intactId="EBI-5280197">
        <id>O75400-2</id>
        <label>PRPF40A</label>
    </interactant>
    <organismsDiffer>false</organismsDiffer>
    <experiments>3</experiments>
</comment>
<comment type="interaction">
    <interactant intactId="EBI-4392727">
        <id>O00257-3</id>
    </interactant>
    <interactant intactId="EBI-286642">
        <id>P62826</id>
        <label>RAN</label>
    </interactant>
    <organismsDiffer>false</organismsDiffer>
    <experiments>3</experiments>
</comment>
<comment type="interaction">
    <interactant intactId="EBI-4392727">
        <id>O00257-3</id>
    </interactant>
    <interactant intactId="EBI-722416">
        <id>Q99496</id>
        <label>RNF2</label>
    </interactant>
    <organismsDiffer>false</organismsDiffer>
    <experiments>2</experiments>
</comment>
<comment type="interaction">
    <interactant intactId="EBI-4392727">
        <id>O00257-3</id>
    </interactant>
    <interactant intactId="EBI-81290">
        <id>P19474</id>
        <label>TRIM21</label>
    </interactant>
    <organismsDiffer>false</organismsDiffer>
    <experiments>3</experiments>
</comment>
<comment type="interaction">
    <interactant intactId="EBI-4392727">
        <id>O00257-3</id>
    </interactant>
    <interactant intactId="EBI-356498">
        <id>P62258</id>
        <label>YWHAE</label>
    </interactant>
    <organismsDiffer>false</organismsDiffer>
    <experiments>2</experiments>
</comment>
<comment type="interaction">
    <interactant intactId="EBI-4392727">
        <id>O00257-3</id>
    </interactant>
    <interactant intactId="EBI-347088">
        <id>P63104</id>
        <label>YWHAZ</label>
    </interactant>
    <organismsDiffer>false</organismsDiffer>
    <experiments>2</experiments>
</comment>
<comment type="subcellular location">
    <subcellularLocation>
        <location evidence="6 8 9 12">Nucleus</location>
    </subcellularLocation>
    <subcellularLocation>
        <location evidence="10">Nucleus speckle</location>
    </subcellularLocation>
    <text evidence="9 13">Localization to nuclear polycomb bodies is required for ZNF131 sumoylation (PubMed:22467880). Localized in distinct foci on chromatin (PubMed:18927235).</text>
</comment>
<comment type="alternative products">
    <event type="alternative splicing"/>
    <isoform>
        <id>O00257-1</id>
        <name>1</name>
        <sequence type="displayed"/>
    </isoform>
    <isoform>
        <id>O00257-3</id>
        <name>2</name>
        <sequence type="described" ref="VSP_041599"/>
    </isoform>
</comment>
<comment type="tissue specificity">
    <text>Ubiquitous.</text>
</comment>
<comment type="domain">
    <text evidence="10">The polyhistidine repeat may act as a targeting signal to nuclear speckles.</text>
</comment>
<comment type="PTM">
    <text evidence="16">Ubiquitinated. Ubiquitination regulates the function of the Polycomb group (PcG) multiprotein PRC1-like complex. Deubiquitinated by USP26.</text>
</comment>
<comment type="PTM">
    <text evidence="6 7 8">Phosphorylated on Thr-497 by HIPK2 upon DNA damage. This phosphorylation stimulates E3 SUMO-protein ligase activity and promotes sumoylation on Lys-494, as well as sumoylation of other target proteins, such as HNRNPK.</text>
</comment>
<comment type="miscellaneous">
    <text>The human orthologs of the Drosophila Polycomb group protein Pc are CBX2, CBX4, CBX6, CBX7 and CBX8. These show distinct nuclear localizations, contribute differently to transcriptional repression, and appear to be part of distinct PRC1-like protein complexes. The hPRC-H complex purified in PubMed:12167701 probably presents a mixture of different complexes containing different Polycomb group proteins.</text>
</comment>
<comment type="sequence caution" evidence="20">
    <conflict type="miscellaneous discrepancy">
        <sequence resource="EMBL-CDS" id="AAH14967"/>
    </conflict>
    <text>Aberrant splicing.</text>
</comment>
<sequence length="560" mass="61368">MELPAVGEHVFAVESIEKKRIRKGRVEYLVKWRGWSPKYNTWEPEENILDPRLLIAFQNRERQEQLMGYRKRGPKPKPLVVQVPTFARRSNVLTGLQDSSTDNRAKLDLGAQGKGQGHQYELNSKKHHQYQPHSKERAGKPPPPGKSGKYYYQLNSKKHHPYQPDPKMYDLQYQGGHKEAPSPTCPDLGAKSHPPDKWAQGAGAKGYLGAVKPLAGAAGAPGKGSEKGPPNGMMPAPKEAVTGNGIGGKMKIVKNKNKNGRIVIVMSKYMENGMQAVKIKSGEVAEGEARSPSHKKRAADERHPPADRTFKKAAGAEEKKVEAPPKRREEEVSGVSDPQPQDAGSRKLSPTKEAFGEQPLQLTTKPDLLAWDPARNTHPPSHHPHPHPHHHHHHHHHHHHAVGLNLSHVRKRCLSETHGEREPCKKRLTARSISTPTCLGGSPAAERPADLPPAAALPQPEVILLDSDLDEPIDLRCVKTRSEAGEPPSSLQVKPETPASAAVAVAAAAAPTTTAEKPPAEAQDEPAESLSEFKPFFGNIIITDVTANCLTVTFKEYVTV</sequence>
<accession>O00257</accession>
<accession>B1PJR7</accession>
<accession>Q6TPI8</accession>
<accession>Q96C04</accession>
<dbReference type="EC" id="2.3.2.-" evidence="6 14"/>
<dbReference type="EMBL" id="AF013956">
    <property type="protein sequence ID" value="AAB80718.1"/>
    <property type="molecule type" value="mRNA"/>
</dbReference>
<dbReference type="EMBL" id="EU439707">
    <property type="protein sequence ID" value="ACA49234.1"/>
    <property type="molecule type" value="mRNA"/>
</dbReference>
<dbReference type="EMBL" id="AY390430">
    <property type="protein sequence ID" value="AAQ97596.1"/>
    <property type="molecule type" value="mRNA"/>
</dbReference>
<dbReference type="EMBL" id="AC100791">
    <property type="status" value="NOT_ANNOTATED_CDS"/>
    <property type="molecule type" value="Genomic_DNA"/>
</dbReference>
<dbReference type="EMBL" id="BC014967">
    <property type="protein sequence ID" value="AAH14967.1"/>
    <property type="status" value="ALT_SEQ"/>
    <property type="molecule type" value="mRNA"/>
</dbReference>
<dbReference type="EMBL" id="U94344">
    <property type="protein sequence ID" value="AAB62734.1"/>
    <property type="molecule type" value="mRNA"/>
</dbReference>
<dbReference type="CCDS" id="CCDS32758.1">
    <molecule id="O00257-1"/>
</dbReference>
<dbReference type="RefSeq" id="NP_003646.2">
    <molecule id="O00257-1"/>
    <property type="nucleotide sequence ID" value="NM_003655.3"/>
</dbReference>
<dbReference type="PDB" id="2K28">
    <property type="method" value="NMR"/>
    <property type="chains" value="A=8-65"/>
</dbReference>
<dbReference type="PDB" id="3I8Z">
    <property type="method" value="X-ray"/>
    <property type="resolution" value="1.51 A"/>
    <property type="chains" value="A=8-62"/>
</dbReference>
<dbReference type="PDB" id="5EPL">
    <property type="method" value="X-ray"/>
    <property type="resolution" value="1.81 A"/>
    <property type="chains" value="A/B=8-65"/>
</dbReference>
<dbReference type="PDBsum" id="2K28"/>
<dbReference type="PDBsum" id="3I8Z"/>
<dbReference type="PDBsum" id="5EPL"/>
<dbReference type="BMRB" id="O00257"/>
<dbReference type="SMR" id="O00257"/>
<dbReference type="BioGRID" id="114105">
    <property type="interactions" value="228"/>
</dbReference>
<dbReference type="ComplexPortal" id="CPX-2594">
    <property type="entry name" value="Polycomb repressive complex 1, RING1-PCGF2-CBX4-PHC1 variant"/>
</dbReference>
<dbReference type="ComplexPortal" id="CPX-2613">
    <property type="entry name" value="Polycomb repressive complex 1, RING1-PCGF2-CBX4-PHC2 variant"/>
</dbReference>
<dbReference type="ComplexPortal" id="CPX-2615">
    <property type="entry name" value="Polycomb repressive complex 1, RING1-PCGF2-CBX4-PHC3 variant"/>
</dbReference>
<dbReference type="ComplexPortal" id="CPX-7505">
    <property type="entry name" value="Polycomb repressive complex 1, RING1-PCGF4-CBX4-PHC1 variant"/>
</dbReference>
<dbReference type="ComplexPortal" id="CPX-7506">
    <property type="entry name" value="Polycomb repressive complex 1, RING1-PCGF4-CBX4-PHC2 variant"/>
</dbReference>
<dbReference type="ComplexPortal" id="CPX-7508">
    <property type="entry name" value="Polycomb repressive complex 1, RING1-PCGF4-CBX4-PHC3 variant"/>
</dbReference>
<dbReference type="ComplexPortal" id="CPX-7524">
    <property type="entry name" value="Polycomb repressive complex 1, RING2-PCGF2-CBX4-PHC1 variant"/>
</dbReference>
<dbReference type="ComplexPortal" id="CPX-7525">
    <property type="entry name" value="Polycomb repressive complex 1, RING2-PCGF2-CBX4-PHC3 variant"/>
</dbReference>
<dbReference type="ComplexPortal" id="CPX-7526">
    <property type="entry name" value="Polycomb repressive complex 1, RING2-PCGF2-CBX4-PHC2 variant"/>
</dbReference>
<dbReference type="ComplexPortal" id="CPX-7545">
    <property type="entry name" value="Polycomb repressive complex 1, RING2-PCGF4-CBX4-PHC1 variant"/>
</dbReference>
<dbReference type="ComplexPortal" id="CPX-7546">
    <property type="entry name" value="Polycomb repressive complex 1, RING2-PCGF4-CBX4-PHC2 variant"/>
</dbReference>
<dbReference type="ComplexPortal" id="CPX-7547">
    <property type="entry name" value="Polycomb repressive complex 1, RING2-PCGF4-CBX4-PHC3 variant"/>
</dbReference>
<dbReference type="CORUM" id="O00257"/>
<dbReference type="DIP" id="DIP-42042N"/>
<dbReference type="ELM" id="O00257"/>
<dbReference type="FunCoup" id="O00257">
    <property type="interactions" value="1857"/>
</dbReference>
<dbReference type="IntAct" id="O00257">
    <property type="interactions" value="122"/>
</dbReference>
<dbReference type="MINT" id="O00257"/>
<dbReference type="STRING" id="9606.ENSP00000269397"/>
<dbReference type="BindingDB" id="O00257"/>
<dbReference type="ChEMBL" id="CHEMBL3232685"/>
<dbReference type="GlyGen" id="O00257">
    <property type="glycosylation" value="2 sites, 1 O-linked glycan (1 site)"/>
</dbReference>
<dbReference type="iPTMnet" id="O00257"/>
<dbReference type="PhosphoSitePlus" id="O00257"/>
<dbReference type="BioMuta" id="CBX4"/>
<dbReference type="jPOST" id="O00257"/>
<dbReference type="MassIVE" id="O00257"/>
<dbReference type="PaxDb" id="9606-ENSP00000269397"/>
<dbReference type="PeptideAtlas" id="O00257"/>
<dbReference type="ProteomicsDB" id="47811">
    <molecule id="O00257-1"/>
</dbReference>
<dbReference type="ProteomicsDB" id="47812">
    <molecule id="O00257-3"/>
</dbReference>
<dbReference type="Pumba" id="O00257"/>
<dbReference type="ABCD" id="O00257">
    <property type="antibodies" value="1 sequenced antibody"/>
</dbReference>
<dbReference type="Antibodypedia" id="1793">
    <property type="antibodies" value="460 antibodies from 38 providers"/>
</dbReference>
<dbReference type="DNASU" id="8535"/>
<dbReference type="Ensembl" id="ENST00000269397.9">
    <molecule id="O00257-1"/>
    <property type="protein sequence ID" value="ENSP00000269397.4"/>
    <property type="gene ID" value="ENSG00000141582.15"/>
</dbReference>
<dbReference type="GeneID" id="8535"/>
<dbReference type="KEGG" id="hsa:8535"/>
<dbReference type="MANE-Select" id="ENST00000269397.9">
    <property type="protein sequence ID" value="ENSP00000269397.4"/>
    <property type="RefSeq nucleotide sequence ID" value="NM_003655.3"/>
    <property type="RefSeq protein sequence ID" value="NP_003646.2"/>
</dbReference>
<dbReference type="UCSC" id="uc002jxe.4">
    <molecule id="O00257-1"/>
    <property type="organism name" value="human"/>
</dbReference>
<dbReference type="AGR" id="HGNC:1554"/>
<dbReference type="CTD" id="8535"/>
<dbReference type="DisGeNET" id="8535"/>
<dbReference type="GeneCards" id="CBX4"/>
<dbReference type="HGNC" id="HGNC:1554">
    <property type="gene designation" value="CBX4"/>
</dbReference>
<dbReference type="HPA" id="ENSG00000141582">
    <property type="expression patterns" value="Tissue enriched (bone)"/>
</dbReference>
<dbReference type="MIM" id="603079">
    <property type="type" value="gene"/>
</dbReference>
<dbReference type="neXtProt" id="NX_O00257"/>
<dbReference type="OpenTargets" id="ENSG00000141582"/>
<dbReference type="PharmGKB" id="PA26129"/>
<dbReference type="VEuPathDB" id="HostDB:ENSG00000141582"/>
<dbReference type="eggNOG" id="KOG2748">
    <property type="taxonomic scope" value="Eukaryota"/>
</dbReference>
<dbReference type="GeneTree" id="ENSGT00940000160081"/>
<dbReference type="HOGENOM" id="CLU_043955_0_0_1"/>
<dbReference type="InParanoid" id="O00257"/>
<dbReference type="OMA" id="CGYADQE"/>
<dbReference type="OrthoDB" id="1918685at2759"/>
<dbReference type="PAN-GO" id="O00257">
    <property type="GO annotations" value="5 GO annotations based on evolutionary models"/>
</dbReference>
<dbReference type="PhylomeDB" id="O00257"/>
<dbReference type="TreeFam" id="TF106456"/>
<dbReference type="PathwayCommons" id="O00257"/>
<dbReference type="Reactome" id="R-HSA-2559580">
    <property type="pathway name" value="Oxidative Stress Induced Senescence"/>
</dbReference>
<dbReference type="Reactome" id="R-HSA-3108214">
    <property type="pathway name" value="SUMOylation of DNA damage response and repair proteins"/>
</dbReference>
<dbReference type="Reactome" id="R-HSA-3899300">
    <property type="pathway name" value="SUMOylation of transcription cofactors"/>
</dbReference>
<dbReference type="Reactome" id="R-HSA-4551638">
    <property type="pathway name" value="SUMOylation of chromatin organization proteins"/>
</dbReference>
<dbReference type="Reactome" id="R-HSA-4570464">
    <property type="pathway name" value="SUMOylation of RNA binding proteins"/>
</dbReference>
<dbReference type="Reactome" id="R-HSA-4655427">
    <property type="pathway name" value="SUMOylation of DNA methylation proteins"/>
</dbReference>
<dbReference type="Reactome" id="R-HSA-8939243">
    <property type="pathway name" value="RUNX1 interacts with co-factors whose precise effect on RUNX1 targets is not known"/>
</dbReference>
<dbReference type="Reactome" id="R-HSA-8943724">
    <property type="pathway name" value="Regulation of PTEN gene transcription"/>
</dbReference>
<dbReference type="SignaLink" id="O00257"/>
<dbReference type="SIGNOR" id="O00257"/>
<dbReference type="UniPathway" id="UPA00886"/>
<dbReference type="BioGRID-ORCS" id="8535">
    <property type="hits" value="28 hits in 1169 CRISPR screens"/>
</dbReference>
<dbReference type="CD-CODE" id="804901D1">
    <property type="entry name" value="Nuclear speckle"/>
</dbReference>
<dbReference type="CD-CODE" id="F701F3BC">
    <property type="entry name" value="PcG body"/>
</dbReference>
<dbReference type="ChiTaRS" id="CBX4">
    <property type="organism name" value="human"/>
</dbReference>
<dbReference type="EvolutionaryTrace" id="O00257"/>
<dbReference type="GenomeRNAi" id="8535"/>
<dbReference type="Pharos" id="O00257">
    <property type="development level" value="Tchem"/>
</dbReference>
<dbReference type="PRO" id="PR:O00257"/>
<dbReference type="Proteomes" id="UP000005640">
    <property type="component" value="Chromosome 17"/>
</dbReference>
<dbReference type="RNAct" id="O00257">
    <property type="molecule type" value="protein"/>
</dbReference>
<dbReference type="Bgee" id="ENSG00000141582">
    <property type="expression patterns" value="Expressed in upper leg skin and 181 other cell types or tissues"/>
</dbReference>
<dbReference type="ExpressionAtlas" id="O00257">
    <property type="expression patterns" value="baseline and differential"/>
</dbReference>
<dbReference type="GO" id="GO:0016604">
    <property type="term" value="C:nuclear body"/>
    <property type="evidence" value="ECO:0000314"/>
    <property type="project" value="HPA"/>
</dbReference>
<dbReference type="GO" id="GO:0016607">
    <property type="term" value="C:nuclear speck"/>
    <property type="evidence" value="ECO:0007669"/>
    <property type="project" value="UniProtKB-SubCell"/>
</dbReference>
<dbReference type="GO" id="GO:0005654">
    <property type="term" value="C:nucleoplasm"/>
    <property type="evidence" value="ECO:0000314"/>
    <property type="project" value="HPA"/>
</dbReference>
<dbReference type="GO" id="GO:0005634">
    <property type="term" value="C:nucleus"/>
    <property type="evidence" value="ECO:0000314"/>
    <property type="project" value="UniProtKB"/>
</dbReference>
<dbReference type="GO" id="GO:0031519">
    <property type="term" value="C:PcG protein complex"/>
    <property type="evidence" value="ECO:0000314"/>
    <property type="project" value="UniProtKB"/>
</dbReference>
<dbReference type="GO" id="GO:0035102">
    <property type="term" value="C:PRC1 complex"/>
    <property type="evidence" value="ECO:0000314"/>
    <property type="project" value="UniProtKB"/>
</dbReference>
<dbReference type="GO" id="GO:0003682">
    <property type="term" value="F:chromatin binding"/>
    <property type="evidence" value="ECO:0007669"/>
    <property type="project" value="Ensembl"/>
</dbReference>
<dbReference type="GO" id="GO:0019899">
    <property type="term" value="F:enzyme binding"/>
    <property type="evidence" value="ECO:0000353"/>
    <property type="project" value="UniProtKB"/>
</dbReference>
<dbReference type="GO" id="GO:0051219">
    <property type="term" value="F:phosphoprotein binding"/>
    <property type="evidence" value="ECO:0007669"/>
    <property type="project" value="Ensembl"/>
</dbReference>
<dbReference type="GO" id="GO:0003727">
    <property type="term" value="F:single-stranded RNA binding"/>
    <property type="evidence" value="ECO:0007669"/>
    <property type="project" value="Ensembl"/>
</dbReference>
<dbReference type="GO" id="GO:0032183">
    <property type="term" value="F:SUMO binding"/>
    <property type="evidence" value="ECO:0000314"/>
    <property type="project" value="MGI"/>
</dbReference>
<dbReference type="GO" id="GO:0061665">
    <property type="term" value="F:SUMO ligase activity"/>
    <property type="evidence" value="ECO:0000314"/>
    <property type="project" value="UniProtKB"/>
</dbReference>
<dbReference type="GO" id="GO:0019789">
    <property type="term" value="F:SUMO transferase activity"/>
    <property type="evidence" value="ECO:0000269"/>
    <property type="project" value="Reactome"/>
</dbReference>
<dbReference type="GO" id="GO:0000976">
    <property type="term" value="F:transcription cis-regulatory region binding"/>
    <property type="evidence" value="ECO:0007669"/>
    <property type="project" value="Ensembl"/>
</dbReference>
<dbReference type="GO" id="GO:0003714">
    <property type="term" value="F:transcription corepressor activity"/>
    <property type="evidence" value="ECO:0000304"/>
    <property type="project" value="ProtInc"/>
</dbReference>
<dbReference type="GO" id="GO:0006325">
    <property type="term" value="P:chromatin organization"/>
    <property type="evidence" value="ECO:0007669"/>
    <property type="project" value="UniProtKB-KW"/>
</dbReference>
<dbReference type="GO" id="GO:0043066">
    <property type="term" value="P:negative regulation of apoptotic process"/>
    <property type="evidence" value="ECO:0000304"/>
    <property type="project" value="ProtInc"/>
</dbReference>
<dbReference type="GO" id="GO:0045892">
    <property type="term" value="P:negative regulation of DNA-templated transcription"/>
    <property type="evidence" value="ECO:0000314"/>
    <property type="project" value="UniProtKB"/>
</dbReference>
<dbReference type="GO" id="GO:0000122">
    <property type="term" value="P:negative regulation of transcription by RNA polymerase II"/>
    <property type="evidence" value="ECO:0000315"/>
    <property type="project" value="UniProtKB"/>
</dbReference>
<dbReference type="GO" id="GO:0016925">
    <property type="term" value="P:protein sumoylation"/>
    <property type="evidence" value="ECO:0000318"/>
    <property type="project" value="GO_Central"/>
</dbReference>
<dbReference type="CDD" id="cd18645">
    <property type="entry name" value="CD_Cbx4"/>
    <property type="match status" value="1"/>
</dbReference>
<dbReference type="FunFam" id="2.40.50.40:FF:000006">
    <property type="entry name" value="Chromobox protein homolog 7"/>
    <property type="match status" value="1"/>
</dbReference>
<dbReference type="Gene3D" id="2.40.50.40">
    <property type="match status" value="1"/>
</dbReference>
<dbReference type="IDEAL" id="IID00688"/>
<dbReference type="InterPro" id="IPR043531">
    <property type="entry name" value="CBX4"/>
</dbReference>
<dbReference type="InterPro" id="IPR033773">
    <property type="entry name" value="CBX7_C"/>
</dbReference>
<dbReference type="InterPro" id="IPR016197">
    <property type="entry name" value="Chromo-like_dom_sf"/>
</dbReference>
<dbReference type="InterPro" id="IPR000953">
    <property type="entry name" value="Chromo/chromo_shadow_dom"/>
</dbReference>
<dbReference type="InterPro" id="IPR017984">
    <property type="entry name" value="Chromo_dom_subgr"/>
</dbReference>
<dbReference type="InterPro" id="IPR023780">
    <property type="entry name" value="Chromo_domain"/>
</dbReference>
<dbReference type="InterPro" id="IPR023779">
    <property type="entry name" value="Chromodomain_CS"/>
</dbReference>
<dbReference type="PANTHER" id="PTHR46727">
    <property type="entry name" value="E3 SUMO-PROTEIN LIGASE CBX4"/>
    <property type="match status" value="1"/>
</dbReference>
<dbReference type="PANTHER" id="PTHR46727:SF1">
    <property type="entry name" value="E3 SUMO-PROTEIN LIGASE CBX4"/>
    <property type="match status" value="1"/>
</dbReference>
<dbReference type="Pfam" id="PF17218">
    <property type="entry name" value="CBX7_C"/>
    <property type="match status" value="1"/>
</dbReference>
<dbReference type="Pfam" id="PF00385">
    <property type="entry name" value="Chromo"/>
    <property type="match status" value="1"/>
</dbReference>
<dbReference type="PRINTS" id="PR00504">
    <property type="entry name" value="CHROMODOMAIN"/>
</dbReference>
<dbReference type="SMART" id="SM00298">
    <property type="entry name" value="CHROMO"/>
    <property type="match status" value="1"/>
</dbReference>
<dbReference type="SUPFAM" id="SSF54160">
    <property type="entry name" value="Chromo domain-like"/>
    <property type="match status" value="1"/>
</dbReference>
<dbReference type="PROSITE" id="PS00598">
    <property type="entry name" value="CHROMO_1"/>
    <property type="match status" value="1"/>
</dbReference>
<dbReference type="PROSITE" id="PS50013">
    <property type="entry name" value="CHROMO_2"/>
    <property type="match status" value="1"/>
</dbReference>
<gene>
    <name type="primary">CBX4</name>
</gene>
<feature type="chain" id="PRO_0000080206" description="E3 SUMO-protein ligase CBX4">
    <location>
        <begin position="1"/>
        <end position="560"/>
    </location>
</feature>
<feature type="domain" description="Chromo" evidence="2">
    <location>
        <begin position="11"/>
        <end position="69"/>
    </location>
</feature>
<feature type="region of interest" description="Interaction with BMI1">
    <location>
        <begin position="1"/>
        <end position="539"/>
    </location>
</feature>
<feature type="region of interest" description="Involved in interaction with H3C15 and H3C1" evidence="9">
    <location>
        <begin position="1"/>
        <end position="75"/>
    </location>
</feature>
<feature type="region of interest" description="Disordered" evidence="3">
    <location>
        <begin position="92"/>
        <end position="152"/>
    </location>
</feature>
<feature type="region of interest" description="Disordered" evidence="3">
    <location>
        <begin position="217"/>
        <end position="243"/>
    </location>
</feature>
<feature type="region of interest" description="Disordered" evidence="3">
    <location>
        <begin position="281"/>
        <end position="404"/>
    </location>
</feature>
<feature type="region of interest" description="Disordered" evidence="3">
    <location>
        <begin position="509"/>
        <end position="528"/>
    </location>
</feature>
<feature type="region of interest" description="Involved in interaction with H3C15 and RNF2" evidence="9">
    <location>
        <begin position="531"/>
        <end position="556"/>
    </location>
</feature>
<feature type="region of interest" description="Interaction with RNF2">
    <location>
        <begin position="540"/>
        <end position="560"/>
    </location>
</feature>
<feature type="compositionally biased region" description="Basic and acidic residues" evidence="3">
    <location>
        <begin position="281"/>
        <end position="291"/>
    </location>
</feature>
<feature type="compositionally biased region" description="Basic and acidic residues" evidence="3">
    <location>
        <begin position="298"/>
        <end position="331"/>
    </location>
</feature>
<feature type="compositionally biased region" description="Basic residues" evidence="3">
    <location>
        <begin position="380"/>
        <end position="401"/>
    </location>
</feature>
<feature type="compositionally biased region" description="Low complexity" evidence="3">
    <location>
        <begin position="509"/>
        <end position="521"/>
    </location>
</feature>
<feature type="modified residue" description="N6-acetyllysine; alternate" evidence="21">
    <location>
        <position position="149"/>
    </location>
</feature>
<feature type="modified residue" description="Phosphoserine" evidence="22">
    <location>
        <position position="182"/>
    </location>
</feature>
<feature type="modified residue" description="Phosphoserine" evidence="23">
    <location>
        <position position="467"/>
    </location>
</feature>
<feature type="modified residue" description="Phosphothreonine; by HIPK2" evidence="8">
    <location>
        <position position="497"/>
    </location>
</feature>
<feature type="cross-link" description="Glycyl lysine isopeptide (Lys-Gly) (interchain with G-Cter in SUMO2)" evidence="27">
    <location>
        <position position="77"/>
    </location>
</feature>
<feature type="cross-link" description="Glycyl lysine isopeptide (Lys-Gly) (interchain with G-Cter in SUMO2)" evidence="24 27">
    <location>
        <position position="106"/>
    </location>
</feature>
<feature type="cross-link" description="Glycyl lysine isopeptide (Lys-Gly) (interchain with G-Cter in SUMO2)" evidence="24 27">
    <location>
        <position position="114"/>
    </location>
</feature>
<feature type="cross-link" description="Glycyl lysine isopeptide (Lys-Gly) (interchain with G-Cter in SUMO2)" evidence="27">
    <location>
        <position position="125"/>
    </location>
</feature>
<feature type="cross-link" description="Glycyl lysine isopeptide (Lys-Gly) (interchain with G-Cter in SUMO2); alternate" evidence="24 26 27">
    <location>
        <position position="149"/>
    </location>
</feature>
<feature type="cross-link" description="Glycyl lysine isopeptide (Lys-Gly) (interchain with G-Cter in SUMO2)" evidence="27">
    <location>
        <position position="157"/>
    </location>
</feature>
<feature type="cross-link" description="Glycyl lysine isopeptide (Lys-Gly) (interchain with G-Cter in SUMO2)" evidence="27">
    <location>
        <position position="167"/>
    </location>
</feature>
<feature type="cross-link" description="Glycyl lysine isopeptide (Lys-Gly) (interchain with G-Cter in SUMO2)" evidence="27">
    <location>
        <position position="178"/>
    </location>
</feature>
<feature type="cross-link" description="Glycyl lysine isopeptide (Lys-Gly) (interchain with G-Cter in SUMO2)" evidence="27">
    <location>
        <position position="191"/>
    </location>
</feature>
<feature type="cross-link" description="Glycyl lysine isopeptide (Lys-Gly) (interchain with G-Cter in SUMO2)" evidence="24 27">
    <location>
        <position position="205"/>
    </location>
</feature>
<feature type="cross-link" description="Glycyl lysine isopeptide (Lys-Gly) (interchain with G-Cter in SUMO2)" evidence="24 26 27">
    <location>
        <position position="212"/>
    </location>
</feature>
<feature type="cross-link" description="Glycyl lysine isopeptide (Lys-Gly) (interchain with G-Cter in SUMO2)" evidence="27">
    <location>
        <position position="223"/>
    </location>
</feature>
<feature type="cross-link" description="Glycyl lysine isopeptide (Lys-Gly) (interchain with G-Cter in SUMO2)" evidence="27">
    <location>
        <position position="249"/>
    </location>
</feature>
<feature type="cross-link" description="Glycyl lysine isopeptide (Lys-Gly) (interchain with G-Cter in SUMO2)" evidence="27">
    <location>
        <position position="268"/>
    </location>
</feature>
<feature type="cross-link" description="Glycyl lysine isopeptide (Lys-Gly) (interchain with G-Cter in SUMO2)" evidence="27">
    <location>
        <position position="278"/>
    </location>
</feature>
<feature type="cross-link" description="Glycyl lysine isopeptide (Lys-Gly) (interchain with G-Cter in SUMO2)" evidence="24 25 26 27">
    <location>
        <position position="280"/>
    </location>
</feature>
<feature type="cross-link" description="Glycyl lysine isopeptide (Lys-Gly) (interchain with G-Cter in SUMO2)" evidence="27">
    <location>
        <position position="320"/>
    </location>
</feature>
<feature type="cross-link" description="Glycyl lysine isopeptide (Lys-Gly) (interchain with G-Cter in SUMO2)" evidence="27">
    <location>
        <position position="352"/>
    </location>
</feature>
<feature type="cross-link" description="Glycyl lysine isopeptide (Lys-Gly) (interchain with G-Cter in SUMO2)" evidence="27">
    <location>
        <position position="365"/>
    </location>
</feature>
<feature type="cross-link" description="Glycyl lysine isopeptide (Lys-Gly) (interchain with G-Cter in SUMO); alternate" evidence="7">
    <location>
        <position position="494"/>
    </location>
</feature>
<feature type="cross-link" description="Glycyl lysine isopeptide (Lys-Gly) (interchain with G-Cter in SUMO2); alternate" evidence="27">
    <location>
        <position position="494"/>
    </location>
</feature>
<feature type="splice variant" id="VSP_041599" description="In isoform 2." evidence="19">
    <location>
        <begin position="127"/>
        <end position="396"/>
    </location>
</feature>
<feature type="mutagenesis site" description="Reduced interaction with H3C15, H3C1 and RNF2." evidence="9">
    <original>I</original>
    <variation>F</variation>
    <location>
        <position position="16"/>
    </location>
</feature>
<feature type="mutagenesis site" description="Abolishes interaction with YWHAZ and YWHAE; impairs interaction with PCGF6 and BMI1; no effect on interaction with RNF2." evidence="12">
    <original>S</original>
    <variation>A</variation>
    <location>
        <position position="434"/>
    </location>
</feature>
<feature type="mutagenesis site" description="No effect on ZNF131 sumoylation." evidence="13">
    <original>K</original>
    <variation>R</variation>
    <location>
        <position position="494"/>
    </location>
</feature>
<feature type="mutagenesis site" description="Small decrease in ZNF131 sumoylation." evidence="13">
    <original>T</original>
    <variation>A</variation>
    <location>
        <position position="497"/>
    </location>
</feature>
<feature type="sequence conflict" description="In Ref. 1; AAB80718." evidence="20" ref="1">
    <location>
        <begin position="137"/>
        <end position="138"/>
    </location>
</feature>
<feature type="sequence conflict" description="In Ref. 1; AAB80718." evidence="20" ref="1">
    <original>P</original>
    <variation>R</variation>
    <location>
        <position position="142"/>
    </location>
</feature>
<feature type="sequence conflict" description="In Ref. 1; AAB80718 and 5; AAB62734." evidence="20" ref="1 5">
    <original>P</original>
    <variation>R</variation>
    <location>
        <position position="458"/>
    </location>
</feature>
<feature type="sequence conflict" description="In Ref. 1; AAB80718 and 5; AAB62734." evidence="20" ref="1 5">
    <original>C</original>
    <variation>S</variation>
    <location>
        <position position="477"/>
    </location>
</feature>
<feature type="sequence conflict" description="In Ref. 1; AAB80718 and 5; AAB62734." evidence="20" ref="1 5">
    <original>T</original>
    <variation>S</variation>
    <location>
        <position position="480"/>
    </location>
</feature>
<feature type="sequence conflict" description="In Ref. 3; ACA49234." evidence="20" ref="3">
    <original>V</original>
    <variation>VAA</variation>
    <location>
        <position position="505"/>
    </location>
</feature>
<feature type="strand" evidence="28">
    <location>
        <begin position="13"/>
        <end position="22"/>
    </location>
</feature>
<feature type="strand" evidence="28">
    <location>
        <begin position="25"/>
        <end position="32"/>
    </location>
</feature>
<feature type="helix" evidence="28">
    <location>
        <begin position="37"/>
        <end position="39"/>
    </location>
</feature>
<feature type="strand" evidence="28">
    <location>
        <begin position="41"/>
        <end position="44"/>
    </location>
</feature>
<feature type="helix" evidence="28">
    <location>
        <begin position="45"/>
        <end position="48"/>
    </location>
</feature>
<feature type="helix" evidence="28">
    <location>
        <begin position="51"/>
        <end position="53"/>
    </location>
</feature>
<proteinExistence type="evidence at protein level"/>
<name>CBX4_HUMAN</name>
<keyword id="KW-0002">3D-structure</keyword>
<keyword id="KW-0007">Acetylation</keyword>
<keyword id="KW-0025">Alternative splicing</keyword>
<keyword id="KW-0156">Chromatin regulator</keyword>
<keyword id="KW-1017">Isopeptide bond</keyword>
<keyword id="KW-0539">Nucleus</keyword>
<keyword id="KW-0597">Phosphoprotein</keyword>
<keyword id="KW-1267">Proteomics identification</keyword>
<keyword id="KW-1185">Reference proteome</keyword>
<keyword id="KW-0678">Repressor</keyword>
<keyword id="KW-0804">Transcription</keyword>
<keyword id="KW-0805">Transcription regulation</keyword>
<keyword id="KW-0808">Transferase</keyword>
<keyword id="KW-0832">Ubl conjugation</keyword>
<keyword id="KW-0833">Ubl conjugation pathway</keyword>
<reference key="1">
    <citation type="journal article" date="1997" name="Mol. Cell. Biol.">
        <title>Interference with the expression of a novel human polycomb protein, hPc2, results in cellular transformation and apoptosis.</title>
        <authorList>
            <person name="Satijn D.P.E."/>
            <person name="Olson D.J."/>
            <person name="van der Vlag J."/>
            <person name="Hamer K.M."/>
            <person name="Lambrechts C."/>
            <person name="Masselink H."/>
            <person name="Gunster M.J."/>
            <person name="Sewalt R.G.A.B."/>
            <person name="van Driel R."/>
            <person name="Otte A.P."/>
        </authorList>
    </citation>
    <scope>NUCLEOTIDE SEQUENCE [MRNA] (ISOFORM 1)</scope>
    <source>
        <tissue>Fetal brain</tissue>
    </source>
</reference>
<reference key="2">
    <citation type="journal article" date="2009" name="PLoS Genet.">
        <title>Genome-wide analysis of histidine repeats reveals their role in the localization of human proteins to the nuclear speckles compartment.</title>
        <authorList>
            <person name="Salichs E."/>
            <person name="Ledda A."/>
            <person name="Mularoni L."/>
            <person name="Alba M.M."/>
            <person name="de la Luna S."/>
        </authorList>
    </citation>
    <scope>NUCLEOTIDE SEQUENCE [MRNA] (ISOFORM 1)</scope>
    <scope>SUBCELLULAR LOCATION</scope>
</reference>
<reference key="3">
    <citation type="submission" date="2003-09" db="EMBL/GenBank/DDBJ databases">
        <title>Cloning and identification of NS5ATP1-binding protein 16.</title>
        <authorList>
            <person name="Liu M."/>
            <person name="Cheng J."/>
            <person name="Wang L."/>
        </authorList>
    </citation>
    <scope>NUCLEOTIDE SEQUENCE [MRNA] (ISOFORM 2)</scope>
</reference>
<reference key="4">
    <citation type="journal article" date="2006" name="Nature">
        <title>DNA sequence of human chromosome 17 and analysis of rearrangement in the human lineage.</title>
        <authorList>
            <person name="Zody M.C."/>
            <person name="Garber M."/>
            <person name="Adams D.J."/>
            <person name="Sharpe T."/>
            <person name="Harrow J."/>
            <person name="Lupski J.R."/>
            <person name="Nicholson C."/>
            <person name="Searle S.M."/>
            <person name="Wilming L."/>
            <person name="Young S.K."/>
            <person name="Abouelleil A."/>
            <person name="Allen N.R."/>
            <person name="Bi W."/>
            <person name="Bloom T."/>
            <person name="Borowsky M.L."/>
            <person name="Bugalter B.E."/>
            <person name="Butler J."/>
            <person name="Chang J.L."/>
            <person name="Chen C.-K."/>
            <person name="Cook A."/>
            <person name="Corum B."/>
            <person name="Cuomo C.A."/>
            <person name="de Jong P.J."/>
            <person name="DeCaprio D."/>
            <person name="Dewar K."/>
            <person name="FitzGerald M."/>
            <person name="Gilbert J."/>
            <person name="Gibson R."/>
            <person name="Gnerre S."/>
            <person name="Goldstein S."/>
            <person name="Grafham D.V."/>
            <person name="Grocock R."/>
            <person name="Hafez N."/>
            <person name="Hagopian D.S."/>
            <person name="Hart E."/>
            <person name="Norman C.H."/>
            <person name="Humphray S."/>
            <person name="Jaffe D.B."/>
            <person name="Jones M."/>
            <person name="Kamal M."/>
            <person name="Khodiyar V.K."/>
            <person name="LaButti K."/>
            <person name="Laird G."/>
            <person name="Lehoczky J."/>
            <person name="Liu X."/>
            <person name="Lokyitsang T."/>
            <person name="Loveland J."/>
            <person name="Lui A."/>
            <person name="Macdonald P."/>
            <person name="Major J.E."/>
            <person name="Matthews L."/>
            <person name="Mauceli E."/>
            <person name="McCarroll S.A."/>
            <person name="Mihalev A.H."/>
            <person name="Mudge J."/>
            <person name="Nguyen C."/>
            <person name="Nicol R."/>
            <person name="O'Leary S.B."/>
            <person name="Osoegawa K."/>
            <person name="Schwartz D.C."/>
            <person name="Shaw-Smith C."/>
            <person name="Stankiewicz P."/>
            <person name="Steward C."/>
            <person name="Swarbreck D."/>
            <person name="Venkataraman V."/>
            <person name="Whittaker C.A."/>
            <person name="Yang X."/>
            <person name="Zimmer A.R."/>
            <person name="Bradley A."/>
            <person name="Hubbard T."/>
            <person name="Birren B.W."/>
            <person name="Rogers J."/>
            <person name="Lander E.S."/>
            <person name="Nusbaum C."/>
        </authorList>
    </citation>
    <scope>NUCLEOTIDE SEQUENCE [LARGE SCALE GENOMIC DNA]</scope>
</reference>
<reference key="5">
    <citation type="journal article" date="2004" name="Genome Res.">
        <title>The status, quality, and expansion of the NIH full-length cDNA project: the Mammalian Gene Collection (MGC).</title>
        <authorList>
            <consortium name="The MGC Project Team"/>
        </authorList>
    </citation>
    <scope>NUCLEOTIDE SEQUENCE [LARGE SCALE MRNA] (ISOFORM 1)</scope>
    <source>
        <tissue>Colon</tissue>
    </source>
</reference>
<reference key="6">
    <citation type="journal article" date="1997" name="Mol. Cell. Biol.">
        <title>RING1 is associated with the polycomb group protein complex and acts as a transcriptional repressor.</title>
        <authorList>
            <person name="Satijn D.P.E."/>
            <person name="Gunster M.J."/>
            <person name="van der Vlag J."/>
            <person name="Hamer K.M."/>
            <person name="Schul W."/>
            <person name="Alkema M.J."/>
            <person name="Saurin A.J."/>
            <person name="Freemont P.S."/>
            <person name="van Driel R."/>
            <person name="Otte A.P."/>
        </authorList>
    </citation>
    <scope>NUCLEOTIDE SEQUENCE [MRNA] OF 457-560 (ISOFORM 1)</scope>
</reference>
<reference key="7">
    <citation type="journal article" date="2002" name="Mol. Cell. Biol.">
        <title>Selective interactions between vertebrate polycomb homologs and the SUV39H1 histone lysine methyltransferase suggest that histone H3-K9 methylation contributes to chromosomal targeting of Polycomb group proteins.</title>
        <authorList>
            <person name="Sewalt R.G.A.B."/>
            <person name="Lachner M."/>
            <person name="Vargas M."/>
            <person name="Hamer K.M."/>
            <person name="den Blaauwen J.L."/>
            <person name="Hendrix T."/>
            <person name="Melcher M."/>
            <person name="Schweizer D."/>
            <person name="Jenuwein T."/>
            <person name="Otte A.P."/>
        </authorList>
    </citation>
    <scope>INTERACTION WITH SUV39H1</scope>
</reference>
<reference key="8">
    <citation type="journal article" date="2002" name="Mol. Cell. Biol.">
        <title>The core of the polycomb repressive complex is compositionally and functionally conserved in flies and humans.</title>
        <authorList>
            <person name="Levine S.S."/>
            <person name="Weiss A."/>
            <person name="Erdjument-Bromage H."/>
            <person name="Shao Z."/>
            <person name="Tempst P."/>
            <person name="Kingston R.E."/>
        </authorList>
    </citation>
    <scope>FUNCTION</scope>
    <scope>IDENTIFICATION BY MASS SPECTROMETRY</scope>
    <scope>IDENTIFICATION IN A PRC1-LIKE HPRC-H COMPLEX WITH BMI1; CBX2; CBX8; PHC1; PHC2; PHC3; RING1 AND RNF2</scope>
</reference>
<reference key="9">
    <citation type="journal article" date="2003" name="Cell">
        <title>The polycomb protein Pc2 is a SUMO E3.</title>
        <authorList>
            <person name="Kagey M.H."/>
            <person name="Melhuish T.A."/>
            <person name="Wotton D."/>
        </authorList>
    </citation>
    <scope>FUNCTION</scope>
    <scope>SUMOYLATION</scope>
    <scope>SUBCELLULAR LOCATION</scope>
</reference>
<reference key="10">
    <citation type="journal article" date="2005" name="EMBO J.">
        <title>Multiple activities contribute to Pc2 E3 function.</title>
        <authorList>
            <person name="Kagey M.H."/>
            <person name="Melhuish T.A."/>
            <person name="Powers S.E."/>
            <person name="Wotton D."/>
        </authorList>
    </citation>
    <scope>SUMOYLATION AT LYS-494</scope>
</reference>
<reference key="11">
    <citation type="journal article" date="2005" name="J. Biol. Chem.">
        <title>Pc2-mediated sumoylation of Smad-interacting protein 1 attenuates transcriptional repression of E-cadherin.</title>
        <authorList>
            <person name="Long J."/>
            <person name="Zuo D."/>
            <person name="Park M."/>
        </authorList>
    </citation>
    <scope>FUNCTION</scope>
</reference>
<reference key="12">
    <citation type="journal article" date="2006" name="Mol. Cell">
        <title>Phosphorylation-dependent control of Pc2 SUMO E3 ligase activity by its substrate protein HIPK2.</title>
        <authorList>
            <person name="Roscic A."/>
            <person name="Moeller A."/>
            <person name="Calzado M.A."/>
            <person name="Renner F."/>
            <person name="Wimmer V.C."/>
            <person name="Gresko E."/>
            <person name="Luedi K.S."/>
            <person name="Schmitz M.L."/>
        </authorList>
    </citation>
    <scope>FUNCTION</scope>
    <scope>INTERACTION WITH HIPK2</scope>
    <scope>SUMOYLATION</scope>
    <scope>SUBCELLULAR LOCATION</scope>
    <scope>PHOSPHORYLATION AT THR-497</scope>
</reference>
<reference key="13">
    <citation type="journal article" date="2008" name="Proc. Natl. Acad. Sci. U.S.A.">
        <title>A quantitative atlas of mitotic phosphorylation.</title>
        <authorList>
            <person name="Dephoure N."/>
            <person name="Zhou C."/>
            <person name="Villen J."/>
            <person name="Beausoleil S.A."/>
            <person name="Bakalarski C.E."/>
            <person name="Elledge S.J."/>
            <person name="Gygi S.P."/>
        </authorList>
    </citation>
    <scope>IDENTIFICATION BY MASS SPECTROMETRY [LARGE SCALE ANALYSIS]</scope>
    <source>
        <tissue>Cervix carcinoma</tissue>
    </source>
</reference>
<reference key="14">
    <citation type="journal article" date="2008" name="Proc. Natl. Acad. Sci. U.S.A.">
        <title>Different polycomb group CBX family proteins associate with distinct regions of chromatin using nonhomologous protein sequences.</title>
        <authorList>
            <person name="Vincenz C."/>
            <person name="Kerppola T.K."/>
        </authorList>
    </citation>
    <scope>INTERACTION WITH H3C15; H3C1 AND RNF2</scope>
    <scope>SUBCELLULAR LOCATION</scope>
    <scope>MUTAGENESIS OF ILE-16</scope>
</reference>
<reference key="15">
    <citation type="journal article" date="2009" name="PLoS ONE">
        <title>Several distinct polycomb complexes regulate and co-localize on the INK4a tumor suppressor locus.</title>
        <authorList>
            <person name="Maertens G.N."/>
            <person name="El Messaoudi-Aubert S."/>
            <person name="Racek T."/>
            <person name="Stock J.K."/>
            <person name="Nicholls J."/>
            <person name="Rodriguez-Niedenfuhr M."/>
            <person name="Gil J."/>
            <person name="Peters G."/>
        </authorList>
    </citation>
    <scope>FUNCTION</scope>
    <scope>IDENTIFICATION IN A PRC1-LIKE COMPLEX</scope>
</reference>
<reference key="16">
    <citation type="journal article" date="2009" name="Science">
        <title>Lysine acetylation targets protein complexes and co-regulates major cellular functions.</title>
        <authorList>
            <person name="Choudhary C."/>
            <person name="Kumar C."/>
            <person name="Gnad F."/>
            <person name="Nielsen M.L."/>
            <person name="Rehman M."/>
            <person name="Walther T.C."/>
            <person name="Olsen J.V."/>
            <person name="Mann M."/>
        </authorList>
    </citation>
    <scope>ACETYLATION [LARGE SCALE ANALYSIS] AT LYS-149</scope>
    <scope>IDENTIFICATION BY MASS SPECTROMETRY [LARGE SCALE ANALYSIS]</scope>
</reference>
<reference key="17">
    <citation type="journal article" date="2011" name="Mol. Cell. Proteomics">
        <title>Interaction proteomics analysis of polycomb proteins defines distinct PRC1 Complexes in mammalian cells.</title>
        <authorList>
            <person name="Vandamme J."/>
            <person name="Volkel P."/>
            <person name="Rosnoblet C."/>
            <person name="Le Faou P."/>
            <person name="Angrand P.O."/>
        </authorList>
    </citation>
    <scope>FUNCTION</scope>
    <scope>IDENTIFICATION BY MASS SPECTROMETRY (ISOFORM 2)</scope>
    <scope>IDENTIFICATION IN A PRC1-LIKE COMPLEX</scope>
    <scope>SELF-ASSOCIATION</scope>
    <scope>SUBCELLULAR LOCATION</scope>
    <scope>MUTAGENESIS OF SER-434</scope>
</reference>
<reference key="18">
    <citation type="journal article" date="2012" name="J. Biol. Chem.">
        <title>Small ubiquitin-like modifier (SUMO) modification of zinc finger protein 131 potentiates its negative effect on estrogen signaling.</title>
        <authorList>
            <person name="Oh Y."/>
            <person name="Chung K.C."/>
        </authorList>
    </citation>
    <scope>FUNCTION IN ZNF131 SUMOYLATION</scope>
    <scope>SUBCELLULAR LOCATION</scope>
    <scope>MUTAGENESIS OF LYS-494 AND THR-497</scope>
</reference>
<reference key="19">
    <citation type="journal article" date="2012" name="J. Biol. Chem.">
        <title>DNA damage-induced heterogeneous nuclear ribonucleoprotein K SUMOylation regulates p53 transcriptional activation.</title>
        <authorList>
            <person name="Pelisch F."/>
            <person name="Pozzi B."/>
            <person name="Risso G."/>
            <person name="Munoz M.J."/>
            <person name="Srebrow A."/>
        </authorList>
    </citation>
    <scope>FUNCTION</scope>
</reference>
<reference key="20">
    <citation type="journal article" date="2013" name="J. Proteome Res.">
        <title>Toward a comprehensive characterization of a human cancer cell phosphoproteome.</title>
        <authorList>
            <person name="Zhou H."/>
            <person name="Di Palma S."/>
            <person name="Preisinger C."/>
            <person name="Peng M."/>
            <person name="Polat A.N."/>
            <person name="Heck A.J."/>
            <person name="Mohammed S."/>
        </authorList>
    </citation>
    <scope>PHOSPHORYLATION [LARGE SCALE ANALYSIS] AT SER-182</scope>
    <scope>IDENTIFICATION BY MASS SPECTROMETRY [LARGE SCALE ANALYSIS]</scope>
    <source>
        <tissue>Cervix carcinoma</tissue>
    </source>
</reference>
<reference key="21">
    <citation type="journal article" date="2014" name="J. Proteomics">
        <title>An enzyme assisted RP-RPLC approach for in-depth analysis of human liver phosphoproteome.</title>
        <authorList>
            <person name="Bian Y."/>
            <person name="Song C."/>
            <person name="Cheng K."/>
            <person name="Dong M."/>
            <person name="Wang F."/>
            <person name="Huang J."/>
            <person name="Sun D."/>
            <person name="Wang L."/>
            <person name="Ye M."/>
            <person name="Zou H."/>
        </authorList>
    </citation>
    <scope>PHOSPHORYLATION [LARGE SCALE ANALYSIS] AT SER-467</scope>
    <scope>IDENTIFICATION BY MASS SPECTROMETRY [LARGE SCALE ANALYSIS]</scope>
    <source>
        <tissue>Liver</tissue>
    </source>
</reference>
<reference key="22">
    <citation type="journal article" date="2014" name="Nat. Struct. Mol. Biol.">
        <title>Uncovering global SUMOylation signaling networks in a site-specific manner.</title>
        <authorList>
            <person name="Hendriks I.A."/>
            <person name="D'Souza R.C."/>
            <person name="Yang B."/>
            <person name="Verlaan-de Vries M."/>
            <person name="Mann M."/>
            <person name="Vertegaal A.C."/>
        </authorList>
    </citation>
    <scope>SUMOYLATION [LARGE SCALE ANALYSIS] AT LYS-106; LYS-114; LYS-149; LYS-205; LYS-212 AND LYS-280</scope>
    <scope>IDENTIFICATION BY MASS SPECTROMETRY [LARGE SCALE ANALYSIS]</scope>
</reference>
<reference key="23">
    <citation type="journal article" date="2015" name="Cell Rep.">
        <title>SUMO-2 orchestrates chromatin modifiers in response to DNA damage.</title>
        <authorList>
            <person name="Hendriks I.A."/>
            <person name="Treffers L.W."/>
            <person name="Verlaan-de Vries M."/>
            <person name="Olsen J.V."/>
            <person name="Vertegaal A.C."/>
        </authorList>
    </citation>
    <scope>SUMOYLATION [LARGE SCALE ANALYSIS] AT LYS-149; LYS-212 AND LYS-280</scope>
    <scope>IDENTIFICATION BY MASS SPECTROMETRY [LARGE SCALE ANALYSIS]</scope>
</reference>
<reference key="24">
    <citation type="journal article" date="2015" name="Mol. Cell. Proteomics">
        <title>System-wide analysis of SUMOylation dynamics in response to replication stress reveals novel small ubiquitin-like modified target proteins and acceptor lysines relevant for genome stability.</title>
        <authorList>
            <person name="Xiao Z."/>
            <person name="Chang J.G."/>
            <person name="Hendriks I.A."/>
            <person name="Sigurdsson J.O."/>
            <person name="Olsen J.V."/>
            <person name="Vertegaal A.C."/>
        </authorList>
    </citation>
    <scope>SUMOYLATION [LARGE SCALE ANALYSIS] AT LYS-280</scope>
    <scope>IDENTIFICATION BY MASS SPECTROMETRY [LARGE SCALE ANALYSIS]</scope>
</reference>
<reference key="25">
    <citation type="journal article" date="2016" name="Sci. Rep.">
        <title>SUMO5, a novel poly-sumo isoform, regulates pml nuclear bodies.</title>
        <authorList>
            <person name="Liang Y.C."/>
            <person name="Lee C.C."/>
            <person name="Yao Y.L."/>
            <person name="Lai C.C."/>
            <person name="Schmitz M.L."/>
            <person name="Yang W.M."/>
        </authorList>
    </citation>
    <scope>INTERACTION WITH SUMO1P1/SUMO5</scope>
</reference>
<reference key="26">
    <citation type="journal article" date="2017" name="Nat. Commun.">
        <title>USP26 functions as a negative regulator of cellular reprogramming by stabilising PRC1 complex components.</title>
        <authorList>
            <person name="Ning B."/>
            <person name="Zhao W."/>
            <person name="Qian C."/>
            <person name="Liu P."/>
            <person name="Li Q."/>
            <person name="Li W."/>
            <person name="Wang R.F."/>
        </authorList>
    </citation>
    <scope>UBIQUITINATION</scope>
    <scope>DEUBIQUITINATION BY USP26</scope>
</reference>
<reference key="27">
    <citation type="journal article" date="2017" name="Nat. Commun.">
        <title>HSP70-Hrd1 axis precludes the oncorepressor potential of N-terminal misfolded Blimp-1s in lymphoma cells.</title>
        <authorList>
            <person name="Wang W.F."/>
            <person name="Yan L."/>
            <person name="Liu Z."/>
            <person name="Liu L.X."/>
            <person name="Lin J."/>
            <person name="Liu Z.Y."/>
            <person name="Chen X.P."/>
            <person name="Zhang W."/>
            <person name="Xu Z.Z."/>
            <person name="Shi T."/>
            <person name="Li J.M."/>
            <person name="Zhao Y.L."/>
            <person name="Meng G."/>
            <person name="Xia Y."/>
            <person name="Li J.Y."/>
            <person name="Zhu J."/>
        </authorList>
    </citation>
    <scope>INTERACTION WITH PRDM1</scope>
</reference>
<reference key="28">
    <citation type="journal article" date="2017" name="Nat. Struct. Mol. Biol.">
        <title>Site-specific mapping of the human SUMO proteome reveals co-modification with phosphorylation.</title>
        <authorList>
            <person name="Hendriks I.A."/>
            <person name="Lyon D."/>
            <person name="Young C."/>
            <person name="Jensen L.J."/>
            <person name="Vertegaal A.C."/>
            <person name="Nielsen M.L."/>
        </authorList>
    </citation>
    <scope>SUMOYLATION [LARGE SCALE ANALYSIS] AT LYS-77; LYS-106; LYS-114; LYS-125; LYS-149; LYS-157; LYS-167; LYS-178; LYS-191; LYS-205; LYS-212; LYS-223; LYS-249; LYS-268; LYS-278; LYS-280; LYS-320; LYS-352; LYS-365 AND LYS-494</scope>
    <scope>IDENTIFICATION BY MASS SPECTROMETRY [LARGE SCALE ANALYSIS]</scope>
</reference>
<reference key="29">
    <citation type="submission" date="2009-02" db="PDB data bank">
        <title>Solution NMR structure of the chromo domain of the chromobox protein homolog 4.</title>
        <authorList>
            <consortium name="Structural genomics consortium (SGC)"/>
        </authorList>
    </citation>
    <scope>STRUCTURE BY NMR OF 8-65</scope>
</reference>
<reference key="30">
    <citation type="submission" date="2009-09" db="PDB data bank">
        <title>Crystal structure of human chromobox homolog 4 (cbx4).</title>
        <authorList>
            <consortium name="Structural genomics consortium (SGC)"/>
        </authorList>
    </citation>
    <scope>X-RAY CRYSTALLOGRAPHY (1.51 ANGSTROMS) OF 8-62</scope>
</reference>
<organism>
    <name type="scientific">Homo sapiens</name>
    <name type="common">Human</name>
    <dbReference type="NCBI Taxonomy" id="9606"/>
    <lineage>
        <taxon>Eukaryota</taxon>
        <taxon>Metazoa</taxon>
        <taxon>Chordata</taxon>
        <taxon>Craniata</taxon>
        <taxon>Vertebrata</taxon>
        <taxon>Euteleostomi</taxon>
        <taxon>Mammalia</taxon>
        <taxon>Eutheria</taxon>
        <taxon>Euarchontoglires</taxon>
        <taxon>Primates</taxon>
        <taxon>Haplorrhini</taxon>
        <taxon>Catarrhini</taxon>
        <taxon>Hominidae</taxon>
        <taxon>Homo</taxon>
    </lineage>
</organism>
<evidence type="ECO:0000250" key="1">
    <source>
        <dbReference type="UniProtKB" id="O55187"/>
    </source>
</evidence>
<evidence type="ECO:0000255" key="2">
    <source>
        <dbReference type="PROSITE-ProRule" id="PRU00053"/>
    </source>
</evidence>
<evidence type="ECO:0000256" key="3">
    <source>
        <dbReference type="SAM" id="MobiDB-lite"/>
    </source>
</evidence>
<evidence type="ECO:0000269" key="4">
    <source>
    </source>
</evidence>
<evidence type="ECO:0000269" key="5">
    <source>
    </source>
</evidence>
<evidence type="ECO:0000269" key="6">
    <source>
    </source>
</evidence>
<evidence type="ECO:0000269" key="7">
    <source>
    </source>
</evidence>
<evidence type="ECO:0000269" key="8">
    <source>
    </source>
</evidence>
<evidence type="ECO:0000269" key="9">
    <source>
    </source>
</evidence>
<evidence type="ECO:0000269" key="10">
    <source>
    </source>
</evidence>
<evidence type="ECO:0000269" key="11">
    <source>
    </source>
</evidence>
<evidence type="ECO:0000269" key="12">
    <source>
    </source>
</evidence>
<evidence type="ECO:0000269" key="13">
    <source>
    </source>
</evidence>
<evidence type="ECO:0000269" key="14">
    <source>
    </source>
</evidence>
<evidence type="ECO:0000269" key="15">
    <source>
    </source>
</evidence>
<evidence type="ECO:0000269" key="16">
    <source>
    </source>
</evidence>
<evidence type="ECO:0000269" key="17">
    <source>
    </source>
</evidence>
<evidence type="ECO:0000303" key="18">
    <source>
    </source>
</evidence>
<evidence type="ECO:0000303" key="19">
    <source ref="3"/>
</evidence>
<evidence type="ECO:0000305" key="20"/>
<evidence type="ECO:0007744" key="21">
    <source>
    </source>
</evidence>
<evidence type="ECO:0007744" key="22">
    <source>
    </source>
</evidence>
<evidence type="ECO:0007744" key="23">
    <source>
    </source>
</evidence>
<evidence type="ECO:0007744" key="24">
    <source>
    </source>
</evidence>
<evidence type="ECO:0007744" key="25">
    <source>
    </source>
</evidence>
<evidence type="ECO:0007744" key="26">
    <source>
    </source>
</evidence>
<evidence type="ECO:0007744" key="27">
    <source>
    </source>
</evidence>
<evidence type="ECO:0007829" key="28">
    <source>
        <dbReference type="PDB" id="3I8Z"/>
    </source>
</evidence>
<protein>
    <recommendedName>
        <fullName>E3 SUMO-protein ligase CBX4</fullName>
        <ecNumber evidence="6 14">2.3.2.-</ecNumber>
    </recommendedName>
    <alternativeName>
        <fullName>Chromobox protein homolog 4</fullName>
    </alternativeName>
    <alternativeName>
        <fullName>Polycomb 2 homolog</fullName>
        <shortName evidence="18">Pc2</shortName>
        <shortName evidence="18">hPc2</shortName>
    </alternativeName>
</protein>